<comment type="function">
    <text evidence="6">Catalyzes the hydrolysis of a carbon-carbon bond in 4,5: 9,10-diseco-3-hydroxy-5,9,17-trioxoandrosta-1(10),2-diene-4-oate (4,9-DSHA) to yield 9,17-dioxo-1,2,3,4,10,19-hexanorandrostan-5-oate (DOHNAA) and 2-hydroxy-hexa-2,4-dienoate (HHD). Is also able to catalyze the hydrolysis of 2-hydroxy-6-oxo-6-phenylhexa-2,4-dienoic acid (HOPDA) and the synthetic analog 8-(2-chlorophenyl)-2-hydroxy-5-methyl-6-oxoocta-2,4-dienoic acid (HOPODA).</text>
</comment>
<comment type="catalytic activity">
    <reaction evidence="6">
        <text>(1E,2Z)-3-hydroxy-5,9,17-trioxo-4,5:9,10-disecoandrosta-1(10),2-dien-4-oate + H2O = 3-[(3aS,4S,7aS)-7a-methyl-1,5-dioxo-octahydro-1H-inden-4-yl]propanoate + (2Z,4Z)-2-hydroxyhexa-2,4-dienoate + H(+)</text>
        <dbReference type="Rhea" id="RHEA:32035"/>
        <dbReference type="ChEBI" id="CHEBI:15377"/>
        <dbReference type="ChEBI" id="CHEBI:15378"/>
        <dbReference type="ChEBI" id="CHEBI:63690"/>
        <dbReference type="ChEBI" id="CHEBI:63692"/>
        <dbReference type="ChEBI" id="CHEBI:63693"/>
        <dbReference type="EC" id="3.7.1.17"/>
    </reaction>
</comment>
<comment type="catalytic activity">
    <reaction evidence="6">
        <text>2,6-dioxo-6-phenylhexa-3-enoate + H2O = 2-oxopent-4-enoate + benzoate + H(+)</text>
        <dbReference type="Rhea" id="RHEA:17161"/>
        <dbReference type="ChEBI" id="CHEBI:11641"/>
        <dbReference type="ChEBI" id="CHEBI:15377"/>
        <dbReference type="ChEBI" id="CHEBI:15378"/>
        <dbReference type="ChEBI" id="CHEBI:16150"/>
        <dbReference type="ChEBI" id="CHEBI:64675"/>
        <dbReference type="EC" id="3.7.1.8"/>
    </reaction>
</comment>
<comment type="biophysicochemical properties">
    <kinetics>
        <KM evidence="3 6">8 uM for 2-hydroxy-6-oxo-6-phenylhexa-2,4-dienoic acid (at pH 7.5 and at 25 degrees Celsius)</KM>
        <KM evidence="3 6">17 uM for 4,5-9,10-diseco-3-hydroxy-5,9,17-trioxoandrosta-1(10),2-diene-4-oic acid (4,9-DSHA) (at pH 7.5 and at 25 degrees Celsius)</KM>
        <KM evidence="3 6">310 uM for 8-(2-chlorophenyl)-2-hydroxy-5-methyl-6-oxoocta-2,4-dienoic acid (at pH 7.5 and at 25 degrees Celsius)</KM>
        <Vmax evidence="3 6">0.06 umol/sec/mg enzyme with 4,9-DSHA as substrate (at pH 8 and at 25 degrees Celsius)</Vmax>
        <Vmax evidence="3 6">0.009 umol/sec/mg enzyme with 2-hydroxy-6-oxo-6-phenylhexa-2,4-dienoic acid as substrate (at pH 8 and at 25 degrees Celsius)</Vmax>
    </kinetics>
</comment>
<comment type="pathway">
    <text>Lipid metabolism; steroid biosynthesis.</text>
</comment>
<comment type="subunit">
    <text evidence="5 6">Homodimer.</text>
</comment>
<comment type="induction">
    <text evidence="4">Induced by KstR.</text>
</comment>
<comment type="miscellaneous">
    <text>Cholesterol metabolism contributes to the survival of M.tuberculosis in the host by helping the bacterial multiplication during earlier stages of infection and to the dissemination of the pathogen in the host.</text>
</comment>
<comment type="similarity">
    <text evidence="7">Belongs to the AB hydrolase superfamily. HsaD family.</text>
</comment>
<name>HSAD_MYCTU</name>
<evidence type="ECO:0000250" key="1"/>
<evidence type="ECO:0000255" key="2"/>
<evidence type="ECO:0000269" key="3">
    <source>
    </source>
</evidence>
<evidence type="ECO:0000269" key="4">
    <source>
    </source>
</evidence>
<evidence type="ECO:0000269" key="5">
    <source>
    </source>
</evidence>
<evidence type="ECO:0000269" key="6">
    <source>
    </source>
</evidence>
<evidence type="ECO:0000305" key="7"/>
<evidence type="ECO:0007829" key="8">
    <source>
        <dbReference type="PDB" id="7ZJT"/>
    </source>
</evidence>
<evidence type="ECO:0007829" key="9">
    <source>
        <dbReference type="PDB" id="7ZM4"/>
    </source>
</evidence>
<gene>
    <name type="primary">hsaD</name>
    <name type="synonym">bphD</name>
    <name type="ordered locus">Rv3569c</name>
</gene>
<reference key="1">
    <citation type="journal article" date="1998" name="Nature">
        <title>Deciphering the biology of Mycobacterium tuberculosis from the complete genome sequence.</title>
        <authorList>
            <person name="Cole S.T."/>
            <person name="Brosch R."/>
            <person name="Parkhill J."/>
            <person name="Garnier T."/>
            <person name="Churcher C.M."/>
            <person name="Harris D.E."/>
            <person name="Gordon S.V."/>
            <person name="Eiglmeier K."/>
            <person name="Gas S."/>
            <person name="Barry C.E. III"/>
            <person name="Tekaia F."/>
            <person name="Badcock K."/>
            <person name="Basham D."/>
            <person name="Brown D."/>
            <person name="Chillingworth T."/>
            <person name="Connor R."/>
            <person name="Davies R.M."/>
            <person name="Devlin K."/>
            <person name="Feltwell T."/>
            <person name="Gentles S."/>
            <person name="Hamlin N."/>
            <person name="Holroyd S."/>
            <person name="Hornsby T."/>
            <person name="Jagels K."/>
            <person name="Krogh A."/>
            <person name="McLean J."/>
            <person name="Moule S."/>
            <person name="Murphy L.D."/>
            <person name="Oliver S."/>
            <person name="Osborne J."/>
            <person name="Quail M.A."/>
            <person name="Rajandream M.A."/>
            <person name="Rogers J."/>
            <person name="Rutter S."/>
            <person name="Seeger K."/>
            <person name="Skelton S."/>
            <person name="Squares S."/>
            <person name="Squares R."/>
            <person name="Sulston J.E."/>
            <person name="Taylor K."/>
            <person name="Whitehead S."/>
            <person name="Barrell B.G."/>
        </authorList>
    </citation>
    <scope>NUCLEOTIDE SEQUENCE [LARGE SCALE GENOMIC DNA]</scope>
    <source>
        <strain>ATCC 25618 / H37Rv</strain>
    </source>
</reference>
<reference key="2">
    <citation type="journal article" date="2007" name="Mol. Microbiol.">
        <title>A highly conserved transcriptional repressor controls a large regulon involved in lipid degradation in Mycobacterium smegmatis and Mycobacterium tuberculosis.</title>
        <authorList>
            <person name="Kendall S.L."/>
            <person name="Withers M."/>
            <person name="Soffair C.N."/>
            <person name="Moreland N.J."/>
            <person name="Gurcha S."/>
            <person name="Sidders B."/>
            <person name="Frita R."/>
            <person name="Ten Bokum A."/>
            <person name="Besra G.S."/>
            <person name="Lott J.S."/>
            <person name="Stoker N.G."/>
        </authorList>
    </citation>
    <scope>INDUCTION</scope>
    <source>
        <strain>ATCC 25618 / H37Rv</strain>
    </source>
</reference>
<reference key="3">
    <citation type="journal article" date="2007" name="Proc. Natl. Acad. Sci. U.S.A.">
        <title>A gene cluster encoding cholesterol catabolism in a soil actinomycete provides insight into Mycobacterium tuberculosis survival in macrophages.</title>
        <authorList>
            <person name="Van der Geize R."/>
            <person name="Yam K."/>
            <person name="Heuser T."/>
            <person name="Wilbrink M.H."/>
            <person name="Hara H."/>
            <person name="Anderton M.C."/>
            <person name="Sim E."/>
            <person name="Dijkhuizen L."/>
            <person name="Davies J.E."/>
            <person name="Mohn W.W."/>
            <person name="Eltis L.D."/>
        </authorList>
    </citation>
    <scope>BIOPHYSICOCHEMICAL PROPERTIES</scope>
    <source>
        <strain>ATCC 25618 / H37Rv</strain>
    </source>
</reference>
<reference key="4">
    <citation type="journal article" date="2011" name="Mol. Cell. Proteomics">
        <title>Proteogenomic analysis of Mycobacterium tuberculosis by high resolution mass spectrometry.</title>
        <authorList>
            <person name="Kelkar D.S."/>
            <person name="Kumar D."/>
            <person name="Kumar P."/>
            <person name="Balakrishnan L."/>
            <person name="Muthusamy B."/>
            <person name="Yadav A.K."/>
            <person name="Shrivastava P."/>
            <person name="Marimuthu A."/>
            <person name="Anand S."/>
            <person name="Sundaram H."/>
            <person name="Kingsbury R."/>
            <person name="Harsha H.C."/>
            <person name="Nair B."/>
            <person name="Prasad T.S."/>
            <person name="Chauhan D.S."/>
            <person name="Katoch K."/>
            <person name="Katoch V.M."/>
            <person name="Kumar P."/>
            <person name="Chaerkady R."/>
            <person name="Ramachandran S."/>
            <person name="Dash D."/>
            <person name="Pandey A."/>
        </authorList>
    </citation>
    <scope>IDENTIFICATION BY MASS SPECTROMETRY [LARGE SCALE ANALYSIS]</scope>
    <source>
        <strain>ATCC 25618 / H37Rv</strain>
    </source>
</reference>
<reference key="5">
    <citation type="journal article" date="2008" name="Acta Crystallogr. F">
        <title>Structure of HsaD, a steroid-degrading hydrolase, from Mycobacterium tuberculosis.</title>
        <authorList>
            <person name="Lack N."/>
            <person name="Lowe E.D."/>
            <person name="Liu J."/>
            <person name="Eltis L.D."/>
            <person name="Noble M.E."/>
            <person name="Sim E."/>
            <person name="Westwood I.M."/>
        </authorList>
    </citation>
    <scope>X-RAY CRYSTALLOGRAPHY (2.35 ANGSTROMS)</scope>
    <scope>SUBUNIT</scope>
    <source>
        <strain>ATCC 25618 / H37Rv</strain>
    </source>
</reference>
<reference key="6">
    <citation type="journal article" date="2010" name="J. Biol. Chem.">
        <title>Characterization of a carbon-carbon hydrolase from Mycobacterium tuberculosis involved in cholesterol metabolism.</title>
        <authorList>
            <person name="Lack N.A."/>
            <person name="Yam K.C."/>
            <person name="Lowe E.D."/>
            <person name="Horsman G.P."/>
            <person name="Owen R.L."/>
            <person name="Sim E."/>
            <person name="Eltis L.D."/>
        </authorList>
    </citation>
    <scope>X-RAY CRYSTALLOGRAPHY (1.8 ANGSTROMS) OF MUTANT SER-114 IN COMPLEX WITH SUBSTRATE ANALOGS</scope>
    <scope>FUNCTION AS A HYDROLASE</scope>
    <scope>CATALYTIC ACTIVITY</scope>
    <scope>MUTAGENESIS OF SER-114</scope>
    <scope>SUBSTRATE SPECIFICITY</scope>
    <scope>BIOPHYSICOCHEMICAL PROPERTIES</scope>
    <scope>SUBUNIT</scope>
</reference>
<accession>P9WNH5</accession>
<accession>L0TEJ3</accession>
<accession>P96851</accession>
<accession>Q7D596</accession>
<feature type="chain" id="PRO_0000404509" description="4,5:9,10-diseco-3-hydroxy-5,9,17-trioxoandrosta-1(10),2-diene-4-oate hydrolase">
    <location>
        <begin position="1"/>
        <end position="291"/>
    </location>
</feature>
<feature type="active site" description="Proton acceptor">
    <location>
        <position position="269"/>
    </location>
</feature>
<feature type="binding site">
    <location>
        <begin position="45"/>
        <end position="46"/>
    </location>
    <ligand>
        <name>substrate</name>
    </ligand>
</feature>
<feature type="binding site">
    <location>
        <position position="54"/>
    </location>
    <ligand>
        <name>substrate</name>
    </ligand>
</feature>
<feature type="binding site" evidence="2">
    <location>
        <position position="113"/>
    </location>
    <ligand>
        <name>substrate</name>
    </ligand>
</feature>
<feature type="binding site">
    <location>
        <position position="115"/>
    </location>
    <ligand>
        <name>substrate</name>
    </ligand>
</feature>
<feature type="binding site" evidence="2">
    <location>
        <position position="192"/>
    </location>
    <ligand>
        <name>substrate</name>
    </ligand>
</feature>
<feature type="binding site" evidence="2">
    <location>
        <position position="270"/>
    </location>
    <ligand>
        <name>substrate</name>
    </ligand>
</feature>
<feature type="site" description="Transition state stabilizer" evidence="1">
    <location>
        <position position="114"/>
    </location>
</feature>
<feature type="mutagenesis site" description="Reduces the hydrolase activity." evidence="6">
    <original>S</original>
    <variation>A</variation>
    <location>
        <position position="114"/>
    </location>
</feature>
<feature type="helix" evidence="9">
    <location>
        <begin position="9"/>
        <end position="12"/>
    </location>
</feature>
<feature type="strand" evidence="9">
    <location>
        <begin position="13"/>
        <end position="31"/>
    </location>
</feature>
<feature type="strand" evidence="9">
    <location>
        <begin position="38"/>
        <end position="42"/>
    </location>
</feature>
<feature type="helix" evidence="9">
    <location>
        <begin position="51"/>
        <end position="54"/>
    </location>
</feature>
<feature type="turn" evidence="9">
    <location>
        <begin position="55"/>
        <end position="58"/>
    </location>
</feature>
<feature type="helix" evidence="9">
    <location>
        <begin position="59"/>
        <end position="63"/>
    </location>
</feature>
<feature type="strand" evidence="9">
    <location>
        <begin position="66"/>
        <end position="71"/>
    </location>
</feature>
<feature type="helix" evidence="9">
    <location>
        <begin position="88"/>
        <end position="103"/>
    </location>
</feature>
<feature type="strand" evidence="9">
    <location>
        <begin position="107"/>
        <end position="113"/>
    </location>
</feature>
<feature type="helix" evidence="9">
    <location>
        <begin position="115"/>
        <end position="126"/>
    </location>
</feature>
<feature type="helix" evidence="9">
    <location>
        <begin position="128"/>
        <end position="130"/>
    </location>
</feature>
<feature type="strand" evidence="9">
    <location>
        <begin position="131"/>
        <end position="138"/>
    </location>
</feature>
<feature type="strand" evidence="9">
    <location>
        <begin position="140"/>
        <end position="142"/>
    </location>
</feature>
<feature type="strand" evidence="9">
    <location>
        <begin position="146"/>
        <end position="148"/>
    </location>
</feature>
<feature type="helix" evidence="9">
    <location>
        <begin position="153"/>
        <end position="163"/>
    </location>
</feature>
<feature type="helix" evidence="9">
    <location>
        <begin position="167"/>
        <end position="175"/>
    </location>
</feature>
<feature type="helix" evidence="9">
    <location>
        <begin position="181"/>
        <end position="183"/>
    </location>
</feature>
<feature type="helix" evidence="9">
    <location>
        <begin position="186"/>
        <end position="196"/>
    </location>
</feature>
<feature type="helix" evidence="9">
    <location>
        <begin position="199"/>
        <end position="210"/>
    </location>
</feature>
<feature type="strand" evidence="8">
    <location>
        <begin position="213"/>
        <end position="215"/>
    </location>
</feature>
<feature type="helix" evidence="9">
    <location>
        <begin position="217"/>
        <end position="220"/>
    </location>
</feature>
<feature type="helix" evidence="9">
    <location>
        <begin position="222"/>
        <end position="224"/>
    </location>
</feature>
<feature type="helix" evidence="9">
    <location>
        <begin position="226"/>
        <end position="228"/>
    </location>
</feature>
<feature type="strand" evidence="9">
    <location>
        <begin position="233"/>
        <end position="238"/>
    </location>
</feature>
<feature type="strand" evidence="9">
    <location>
        <begin position="242"/>
        <end position="244"/>
    </location>
</feature>
<feature type="helix" evidence="9">
    <location>
        <begin position="246"/>
        <end position="249"/>
    </location>
</feature>
<feature type="helix" evidence="9">
    <location>
        <begin position="250"/>
        <end position="255"/>
    </location>
</feature>
<feature type="strand" evidence="9">
    <location>
        <begin position="259"/>
        <end position="266"/>
    </location>
</feature>
<feature type="helix" evidence="9">
    <location>
        <begin position="271"/>
        <end position="274"/>
    </location>
</feature>
<feature type="helix" evidence="9">
    <location>
        <begin position="276"/>
        <end position="286"/>
    </location>
</feature>
<keyword id="KW-0002">3D-structure</keyword>
<keyword id="KW-0058">Aromatic hydrocarbons catabolism</keyword>
<keyword id="KW-0378">Hydrolase</keyword>
<keyword id="KW-0442">Lipid degradation</keyword>
<keyword id="KW-0443">Lipid metabolism</keyword>
<keyword id="KW-1185">Reference proteome</keyword>
<organism>
    <name type="scientific">Mycobacterium tuberculosis (strain ATCC 25618 / H37Rv)</name>
    <dbReference type="NCBI Taxonomy" id="83332"/>
    <lineage>
        <taxon>Bacteria</taxon>
        <taxon>Bacillati</taxon>
        <taxon>Actinomycetota</taxon>
        <taxon>Actinomycetes</taxon>
        <taxon>Mycobacteriales</taxon>
        <taxon>Mycobacteriaceae</taxon>
        <taxon>Mycobacterium</taxon>
        <taxon>Mycobacterium tuberculosis complex</taxon>
    </lineage>
</organism>
<sequence>MTATEELTFESTSRFAEVDVDGPLKLHYHEAGVGNDQTVVLLHGGGPGAASWTNFSRNIAVLARHFHVLAVDQPGYGHSDKRAEHGQFNRYAAMALKGLFDQLGLGRVPLVGNSLGGGTAVRFALDYPARAGRLVLMGPGGLSINLFAPDPTEGVKRLSKFSVAPTRENLEAFLRVMVYDKNLITPELVDQRFALASTPESLTATRAMGKSFAGADFEAGMMWREVYRLRQPVLLIWGREDRVNPLDGALVALKTIPRAQLHVFGQCGHWVQVEKFDEFNKLTIEFLGGGR</sequence>
<proteinExistence type="evidence at protein level"/>
<protein>
    <recommendedName>
        <fullName>4,5:9,10-diseco-3-hydroxy-5,9,17-trioxoandrosta-1(10),2-diene-4-oate hydrolase</fullName>
        <ecNumber>3.7.1.17</ecNumber>
    </recommendedName>
    <alternativeName>
        <fullName>2-hydroxy-6-oxo-6-phenylhexa-2,4-dienoate hydrolase</fullName>
        <shortName>HOPDA hydrolase</shortName>
        <ecNumber>3.7.1.8</ecNumber>
    </alternativeName>
    <alternativeName>
        <fullName>Meta-cleavage product hydrolase</fullName>
        <shortName>MCP hydrolase</shortName>
    </alternativeName>
</protein>
<dbReference type="EC" id="3.7.1.17"/>
<dbReference type="EC" id="3.7.1.8"/>
<dbReference type="EMBL" id="AL123456">
    <property type="protein sequence ID" value="CCP46392.1"/>
    <property type="molecule type" value="Genomic_DNA"/>
</dbReference>
<dbReference type="PIR" id="G70605">
    <property type="entry name" value="G70605"/>
</dbReference>
<dbReference type="RefSeq" id="NP_218086.1">
    <property type="nucleotide sequence ID" value="NC_000962.3"/>
</dbReference>
<dbReference type="RefSeq" id="WP_003419381.1">
    <property type="nucleotide sequence ID" value="NZ_NVQJ01000014.1"/>
</dbReference>
<dbReference type="PDB" id="2VF2">
    <property type="method" value="X-ray"/>
    <property type="resolution" value="2.35 A"/>
    <property type="chains" value="A/B=1-291"/>
</dbReference>
<dbReference type="PDB" id="2WUD">
    <property type="method" value="X-ray"/>
    <property type="resolution" value="2.10 A"/>
    <property type="chains" value="A/B=1-291"/>
</dbReference>
<dbReference type="PDB" id="2WUE">
    <property type="method" value="X-ray"/>
    <property type="resolution" value="1.80 A"/>
    <property type="chains" value="A/B=1-291"/>
</dbReference>
<dbReference type="PDB" id="2WUF">
    <property type="method" value="X-ray"/>
    <property type="resolution" value="1.90 A"/>
    <property type="chains" value="A/B=1-291"/>
</dbReference>
<dbReference type="PDB" id="2WUG">
    <property type="method" value="X-ray"/>
    <property type="resolution" value="1.80 A"/>
    <property type="chains" value="A/B=1-291"/>
</dbReference>
<dbReference type="PDB" id="5JZ9">
    <property type="method" value="X-ray"/>
    <property type="resolution" value="2.68 A"/>
    <property type="chains" value="A/B=7-290"/>
</dbReference>
<dbReference type="PDB" id="5JZB">
    <property type="method" value="X-ray"/>
    <property type="resolution" value="2.10 A"/>
    <property type="chains" value="A/B=7-288"/>
</dbReference>
<dbReference type="PDB" id="5JZS">
    <property type="method" value="X-ray"/>
    <property type="resolution" value="2.27 A"/>
    <property type="chains" value="A/B=7-290"/>
</dbReference>
<dbReference type="PDB" id="7ZJT">
    <property type="method" value="X-ray"/>
    <property type="resolution" value="1.96 A"/>
    <property type="chains" value="A/B=1-291"/>
</dbReference>
<dbReference type="PDB" id="7ZM1">
    <property type="method" value="X-ray"/>
    <property type="resolution" value="2.15 A"/>
    <property type="chains" value="A/B=1-291"/>
</dbReference>
<dbReference type="PDB" id="7ZM2">
    <property type="method" value="X-ray"/>
    <property type="resolution" value="2.20 A"/>
    <property type="chains" value="A/B=1-291"/>
</dbReference>
<dbReference type="PDB" id="7ZM3">
    <property type="method" value="X-ray"/>
    <property type="resolution" value="1.81 A"/>
    <property type="chains" value="A/B=1-291"/>
</dbReference>
<dbReference type="PDB" id="7ZM4">
    <property type="method" value="X-ray"/>
    <property type="resolution" value="1.62 A"/>
    <property type="chains" value="A/B=1-291"/>
</dbReference>
<dbReference type="PDBsum" id="2VF2"/>
<dbReference type="PDBsum" id="2WUD"/>
<dbReference type="PDBsum" id="2WUE"/>
<dbReference type="PDBsum" id="2WUF"/>
<dbReference type="PDBsum" id="2WUG"/>
<dbReference type="PDBsum" id="5JZ9"/>
<dbReference type="PDBsum" id="5JZB"/>
<dbReference type="PDBsum" id="5JZS"/>
<dbReference type="PDBsum" id="7ZJT"/>
<dbReference type="PDBsum" id="7ZM1"/>
<dbReference type="PDBsum" id="7ZM2"/>
<dbReference type="PDBsum" id="7ZM3"/>
<dbReference type="PDBsum" id="7ZM4"/>
<dbReference type="SMR" id="P9WNH5"/>
<dbReference type="FunCoup" id="P9WNH5">
    <property type="interactions" value="115"/>
</dbReference>
<dbReference type="STRING" id="83332.Rv3569c"/>
<dbReference type="DrugBank" id="DB07911">
    <property type="generic name" value="(3E)-2,6-DIOXO-6-PHENYLHEX-3-ENOATE"/>
</dbReference>
<dbReference type="SwissLipids" id="SLP:000001006"/>
<dbReference type="ESTHER" id="myctu-Rv3569c">
    <property type="family name" value="Carbon-carbon_bond_hydrolase"/>
</dbReference>
<dbReference type="PaxDb" id="83332-Rv3569c"/>
<dbReference type="DNASU" id="887378"/>
<dbReference type="GeneID" id="887378"/>
<dbReference type="KEGG" id="mtu:Rv3569c"/>
<dbReference type="KEGG" id="mtv:RVBD_3569c"/>
<dbReference type="TubercuList" id="Rv3569c"/>
<dbReference type="eggNOG" id="COG2267">
    <property type="taxonomic scope" value="Bacteria"/>
</dbReference>
<dbReference type="InParanoid" id="P9WNH5"/>
<dbReference type="OrthoDB" id="9801162at2"/>
<dbReference type="PhylomeDB" id="P9WNH5"/>
<dbReference type="BioCyc" id="MetaCyc:G185E-7847-MONOMER"/>
<dbReference type="BRENDA" id="3.7.1.8">
    <property type="organism ID" value="3445"/>
</dbReference>
<dbReference type="SABIO-RK" id="P9WNH5"/>
<dbReference type="UniPathway" id="UPA00062"/>
<dbReference type="EvolutionaryTrace" id="P9WNH5"/>
<dbReference type="PRO" id="PR:P9WNH5"/>
<dbReference type="Proteomes" id="UP000001584">
    <property type="component" value="Chromosome"/>
</dbReference>
<dbReference type="GO" id="GO:0009274">
    <property type="term" value="C:peptidoglycan-based cell wall"/>
    <property type="evidence" value="ECO:0007005"/>
    <property type="project" value="MTBBASE"/>
</dbReference>
<dbReference type="GO" id="GO:0005886">
    <property type="term" value="C:plasma membrane"/>
    <property type="evidence" value="ECO:0007005"/>
    <property type="project" value="MTBBASE"/>
</dbReference>
<dbReference type="GO" id="GO:0018774">
    <property type="term" value="F:2,6-dioxo-6-phenylhexa-3-enoate hydrolase activity"/>
    <property type="evidence" value="ECO:0007669"/>
    <property type="project" value="RHEA"/>
</dbReference>
<dbReference type="GO" id="GO:0102296">
    <property type="term" value="F:4,5-9,10-diseco-3-hydroxy-5,9,17-trioxoandrosta-1(10),2-diene-4-oate hydrolase activity"/>
    <property type="evidence" value="ECO:0007669"/>
    <property type="project" value="UniProtKB-EC"/>
</dbReference>
<dbReference type="GO" id="GO:0016823">
    <property type="term" value="F:hydrolase activity, acting on acid carbon-carbon bonds, in ketonic substances"/>
    <property type="evidence" value="ECO:0000314"/>
    <property type="project" value="UniProtKB"/>
</dbReference>
<dbReference type="GO" id="GO:0051701">
    <property type="term" value="P:biological process involved in interaction with host"/>
    <property type="evidence" value="ECO:0000315"/>
    <property type="project" value="MTBBASE"/>
</dbReference>
<dbReference type="GO" id="GO:0016042">
    <property type="term" value="P:lipid catabolic process"/>
    <property type="evidence" value="ECO:0007669"/>
    <property type="project" value="UniProtKB-KW"/>
</dbReference>
<dbReference type="GO" id="GO:0006694">
    <property type="term" value="P:steroid biosynthetic process"/>
    <property type="evidence" value="ECO:0007669"/>
    <property type="project" value="UniProtKB-UniPathway"/>
</dbReference>
<dbReference type="FunFam" id="3.40.50.1820:FF:000220">
    <property type="entry name" value="4,5:9,10-diseco-3-hydroxy-5,9,17-trioxoandrosta-1(10),2-diene-4-oate hydrolase"/>
    <property type="match status" value="1"/>
</dbReference>
<dbReference type="Gene3D" id="3.40.50.1820">
    <property type="entry name" value="alpha/beta hydrolase"/>
    <property type="match status" value="1"/>
</dbReference>
<dbReference type="InterPro" id="IPR000073">
    <property type="entry name" value="AB_hydrolase_1"/>
</dbReference>
<dbReference type="InterPro" id="IPR029058">
    <property type="entry name" value="AB_hydrolase_fold"/>
</dbReference>
<dbReference type="InterPro" id="IPR054676">
    <property type="entry name" value="HsaD"/>
</dbReference>
<dbReference type="NCBIfam" id="NF045632">
    <property type="entry name" value="hydroxlase_HsaD"/>
    <property type="match status" value="1"/>
</dbReference>
<dbReference type="PANTHER" id="PTHR46438">
    <property type="entry name" value="ALPHA/BETA-HYDROLASES SUPERFAMILY PROTEIN"/>
    <property type="match status" value="1"/>
</dbReference>
<dbReference type="PANTHER" id="PTHR46438:SF11">
    <property type="entry name" value="LIPASE-RELATED"/>
    <property type="match status" value="1"/>
</dbReference>
<dbReference type="Pfam" id="PF00561">
    <property type="entry name" value="Abhydrolase_1"/>
    <property type="match status" value="1"/>
</dbReference>
<dbReference type="PRINTS" id="PR00111">
    <property type="entry name" value="ABHYDROLASE"/>
</dbReference>
<dbReference type="SUPFAM" id="SSF53474">
    <property type="entry name" value="alpha/beta-Hydrolases"/>
    <property type="match status" value="1"/>
</dbReference>